<reference key="1">
    <citation type="journal article" date="2008" name="PLoS ONE">
        <title>A recalibrated molecular clock and independent origins for the cholera pandemic clones.</title>
        <authorList>
            <person name="Feng L."/>
            <person name="Reeves P.R."/>
            <person name="Lan R."/>
            <person name="Ren Y."/>
            <person name="Gao C."/>
            <person name="Zhou Z."/>
            <person name="Ren Y."/>
            <person name="Cheng J."/>
            <person name="Wang W."/>
            <person name="Wang J."/>
            <person name="Qian W."/>
            <person name="Li D."/>
            <person name="Wang L."/>
        </authorList>
    </citation>
    <scope>NUCLEOTIDE SEQUENCE [LARGE SCALE GENOMIC DNA]</scope>
    <source>
        <strain>M66-2</strain>
    </source>
</reference>
<name>Y2889_VIBCM</name>
<gene>
    <name type="ordered locus">VCM66_A0089</name>
</gene>
<protein>
    <recommendedName>
        <fullName evidence="1">UPF0251 protein VCM66_A0089</fullName>
    </recommendedName>
</protein>
<organism>
    <name type="scientific">Vibrio cholerae serotype O1 (strain M66-2)</name>
    <dbReference type="NCBI Taxonomy" id="579112"/>
    <lineage>
        <taxon>Bacteria</taxon>
        <taxon>Pseudomonadati</taxon>
        <taxon>Pseudomonadota</taxon>
        <taxon>Gammaproteobacteria</taxon>
        <taxon>Vibrionales</taxon>
        <taxon>Vibrionaceae</taxon>
        <taxon>Vibrio</taxon>
    </lineage>
</organism>
<dbReference type="EMBL" id="CP001234">
    <property type="protein sequence ID" value="ACP07070.1"/>
    <property type="molecule type" value="Genomic_DNA"/>
</dbReference>
<dbReference type="RefSeq" id="WP_000113593.1">
    <property type="nucleotide sequence ID" value="NC_012580.1"/>
</dbReference>
<dbReference type="SMR" id="C3LUB5"/>
<dbReference type="KEGG" id="vcm:VCM66_A0089"/>
<dbReference type="HOGENOM" id="CLU_094511_2_1_6"/>
<dbReference type="Proteomes" id="UP000001217">
    <property type="component" value="Chromosome II"/>
</dbReference>
<dbReference type="HAMAP" id="MF_00674">
    <property type="entry name" value="UPF0251"/>
    <property type="match status" value="1"/>
</dbReference>
<dbReference type="InterPro" id="IPR002852">
    <property type="entry name" value="UPF0251"/>
</dbReference>
<dbReference type="PANTHER" id="PTHR37478">
    <property type="match status" value="1"/>
</dbReference>
<dbReference type="PANTHER" id="PTHR37478:SF2">
    <property type="entry name" value="UPF0251 PROTEIN TK0562"/>
    <property type="match status" value="1"/>
</dbReference>
<dbReference type="Pfam" id="PF02001">
    <property type="entry name" value="DUF134"/>
    <property type="match status" value="1"/>
</dbReference>
<accession>C3LUB5</accession>
<sequence>MARPKIPRRIECHPPASCFKPNGVPIRQLARVELAPDELEALRLVDQLGLQQQQAALQMQVSRQTLANLVKAARFKVVDCLLHQKALYIQAIDNKSSD</sequence>
<evidence type="ECO:0000255" key="1">
    <source>
        <dbReference type="HAMAP-Rule" id="MF_00674"/>
    </source>
</evidence>
<proteinExistence type="inferred from homology"/>
<feature type="chain" id="PRO_1000147684" description="UPF0251 protein VCM66_A0089">
    <location>
        <begin position="1"/>
        <end position="98"/>
    </location>
</feature>
<comment type="similarity">
    <text evidence="1">Belongs to the UPF0251 family.</text>
</comment>